<organism>
    <name type="scientific">Caenorhabditis elegans</name>
    <dbReference type="NCBI Taxonomy" id="6239"/>
    <lineage>
        <taxon>Eukaryota</taxon>
        <taxon>Metazoa</taxon>
        <taxon>Ecdysozoa</taxon>
        <taxon>Nematoda</taxon>
        <taxon>Chromadorea</taxon>
        <taxon>Rhabditida</taxon>
        <taxon>Rhabditina</taxon>
        <taxon>Rhabditomorpha</taxon>
        <taxon>Rhabditoidea</taxon>
        <taxon>Rhabditidae</taxon>
        <taxon>Peloderinae</taxon>
        <taxon>Caenorhabditis</taxon>
    </lineage>
</organism>
<keyword id="KW-0965">Cell junction</keyword>
<keyword id="KW-1015">Disulfide bond</keyword>
<keyword id="KW-0325">Glycoprotein</keyword>
<keyword id="KW-0472">Membrane</keyword>
<keyword id="KW-1185">Reference proteome</keyword>
<keyword id="KW-0732">Signal</keyword>
<keyword id="KW-0768">Sushi</keyword>
<keyword id="KW-0812">Transmembrane</keyword>
<keyword id="KW-1133">Transmembrane helix</keyword>
<dbReference type="EMBL" id="Z29560">
    <property type="protein sequence ID" value="CAA82664.1"/>
    <property type="molecule type" value="Genomic_DNA"/>
</dbReference>
<dbReference type="PIR" id="H88569">
    <property type="entry name" value="H88569"/>
</dbReference>
<dbReference type="PIR" id="S41028">
    <property type="entry name" value="S41028"/>
</dbReference>
<dbReference type="SMR" id="P34501"/>
<dbReference type="FunCoup" id="P34501">
    <property type="interactions" value="20"/>
</dbReference>
<dbReference type="STRING" id="6239.K03H1.5.1"/>
<dbReference type="iPTMnet" id="P34501"/>
<dbReference type="PaxDb" id="6239-K03H1.5"/>
<dbReference type="PeptideAtlas" id="P34501"/>
<dbReference type="EnsemblMetazoa" id="K03H1.5.1">
    <property type="protein sequence ID" value="K03H1.5.1"/>
    <property type="gene ID" value="WBGene00010540"/>
</dbReference>
<dbReference type="KEGG" id="cel:CELE_K03H1.5"/>
<dbReference type="UCSC" id="K03H1.5">
    <property type="organism name" value="c. elegans"/>
</dbReference>
<dbReference type="AGR" id="WB:WBGene00010540"/>
<dbReference type="CTD" id="176404"/>
<dbReference type="WormBase" id="K03H1.5">
    <property type="protein sequence ID" value="CE03459"/>
    <property type="gene ID" value="WBGene00010540"/>
    <property type="gene designation" value="dec-7"/>
</dbReference>
<dbReference type="eggNOG" id="KOG4291">
    <property type="taxonomic scope" value="Eukaryota"/>
</dbReference>
<dbReference type="GeneTree" id="ENSGT00730000110943"/>
<dbReference type="HOGENOM" id="CLU_003648_1_0_1"/>
<dbReference type="InParanoid" id="P34501"/>
<dbReference type="OMA" id="FYYWRRM"/>
<dbReference type="OrthoDB" id="6051552at2759"/>
<dbReference type="PhylomeDB" id="P34501"/>
<dbReference type="PRO" id="PR:P34501"/>
<dbReference type="Proteomes" id="UP000001940">
    <property type="component" value="Chromosome III"/>
</dbReference>
<dbReference type="Bgee" id="WBGene00010540">
    <property type="expression patterns" value="Expressed in material anatomical entity and 4 other cell types or tissues"/>
</dbReference>
<dbReference type="GO" id="GO:0043296">
    <property type="term" value="C:apical junction complex"/>
    <property type="evidence" value="ECO:0000314"/>
    <property type="project" value="WormBase"/>
</dbReference>
<dbReference type="GO" id="GO:0005615">
    <property type="term" value="C:extracellular space"/>
    <property type="evidence" value="ECO:0000318"/>
    <property type="project" value="GO_Central"/>
</dbReference>
<dbReference type="GO" id="GO:0098631">
    <property type="term" value="F:cell adhesion mediator activity"/>
    <property type="evidence" value="ECO:0000305"/>
    <property type="project" value="WormBase"/>
</dbReference>
<dbReference type="GO" id="GO:0098742">
    <property type="term" value="P:cell-cell adhesion via plasma-membrane adhesion molecules"/>
    <property type="evidence" value="ECO:0000305"/>
    <property type="project" value="WormBase"/>
</dbReference>
<dbReference type="GO" id="GO:0007160">
    <property type="term" value="P:cell-matrix adhesion"/>
    <property type="evidence" value="ECO:0007669"/>
    <property type="project" value="InterPro"/>
</dbReference>
<dbReference type="GO" id="GO:2000747">
    <property type="term" value="P:negative regulation of defecation rhythm"/>
    <property type="evidence" value="ECO:0000315"/>
    <property type="project" value="WormBase"/>
</dbReference>
<dbReference type="CDD" id="cd00033">
    <property type="entry name" value="CCP"/>
    <property type="match status" value="1"/>
</dbReference>
<dbReference type="Gene3D" id="2.10.70.10">
    <property type="entry name" value="Complement Module, domain 1"/>
    <property type="match status" value="1"/>
</dbReference>
<dbReference type="Gene3D" id="2.60.40.10">
    <property type="entry name" value="Immunoglobulins"/>
    <property type="match status" value="1"/>
</dbReference>
<dbReference type="InterPro" id="IPR005533">
    <property type="entry name" value="AMOP_dom"/>
</dbReference>
<dbReference type="InterPro" id="IPR056619">
    <property type="entry name" value="C8-3_MUC4"/>
</dbReference>
<dbReference type="InterPro" id="IPR051495">
    <property type="entry name" value="Epithelial_Barrier/Signaling"/>
</dbReference>
<dbReference type="InterPro" id="IPR013783">
    <property type="entry name" value="Ig-like_fold"/>
</dbReference>
<dbReference type="InterPro" id="IPR014756">
    <property type="entry name" value="Ig_E-set"/>
</dbReference>
<dbReference type="InterPro" id="IPR002909">
    <property type="entry name" value="IPT_dom"/>
</dbReference>
<dbReference type="InterPro" id="IPR003886">
    <property type="entry name" value="NIDO_dom"/>
</dbReference>
<dbReference type="InterPro" id="IPR035976">
    <property type="entry name" value="Sushi/SCR/CCP_sf"/>
</dbReference>
<dbReference type="InterPro" id="IPR000436">
    <property type="entry name" value="Sushi_SCR_CCP_dom"/>
</dbReference>
<dbReference type="InterPro" id="IPR001846">
    <property type="entry name" value="VWF_type-D"/>
</dbReference>
<dbReference type="PANTHER" id="PTHR13802">
    <property type="entry name" value="MUCIN 4-RELATED"/>
    <property type="match status" value="1"/>
</dbReference>
<dbReference type="PANTHER" id="PTHR13802:SF52">
    <property type="entry name" value="MUCIN-4"/>
    <property type="match status" value="1"/>
</dbReference>
<dbReference type="Pfam" id="PF03782">
    <property type="entry name" value="AMOP"/>
    <property type="match status" value="1"/>
</dbReference>
<dbReference type="Pfam" id="PF23263">
    <property type="entry name" value="C8-3_MUC4"/>
    <property type="match status" value="1"/>
</dbReference>
<dbReference type="Pfam" id="PF06119">
    <property type="entry name" value="NIDO"/>
    <property type="match status" value="1"/>
</dbReference>
<dbReference type="Pfam" id="PF00084">
    <property type="entry name" value="Sushi"/>
    <property type="match status" value="1"/>
</dbReference>
<dbReference type="Pfam" id="PF00094">
    <property type="entry name" value="VWD"/>
    <property type="match status" value="1"/>
</dbReference>
<dbReference type="SMART" id="SM00723">
    <property type="entry name" value="AMOP"/>
    <property type="match status" value="1"/>
</dbReference>
<dbReference type="SMART" id="SM00032">
    <property type="entry name" value="CCP"/>
    <property type="match status" value="1"/>
</dbReference>
<dbReference type="SMART" id="SM00429">
    <property type="entry name" value="IPT"/>
    <property type="match status" value="1"/>
</dbReference>
<dbReference type="SMART" id="SM00539">
    <property type="entry name" value="NIDO"/>
    <property type="match status" value="1"/>
</dbReference>
<dbReference type="SMART" id="SM00216">
    <property type="entry name" value="VWD"/>
    <property type="match status" value="1"/>
</dbReference>
<dbReference type="SUPFAM" id="SSF57535">
    <property type="entry name" value="Complement control module/SCR domain"/>
    <property type="match status" value="1"/>
</dbReference>
<dbReference type="SUPFAM" id="SSF81296">
    <property type="entry name" value="E set domains"/>
    <property type="match status" value="1"/>
</dbReference>
<dbReference type="PROSITE" id="PS50856">
    <property type="entry name" value="AMOP"/>
    <property type="match status" value="1"/>
</dbReference>
<dbReference type="PROSITE" id="PS51220">
    <property type="entry name" value="NIDO"/>
    <property type="match status" value="1"/>
</dbReference>
<dbReference type="PROSITE" id="PS50923">
    <property type="entry name" value="SUSHI"/>
    <property type="match status" value="1"/>
</dbReference>
<dbReference type="PROSITE" id="PS51233">
    <property type="entry name" value="VWFD"/>
    <property type="match status" value="1"/>
</dbReference>
<evidence type="ECO:0000250" key="1"/>
<evidence type="ECO:0000250" key="2">
    <source>
        <dbReference type="UniProtKB" id="Q9UGT4"/>
    </source>
</evidence>
<evidence type="ECO:0000255" key="3"/>
<evidence type="ECO:0000255" key="4">
    <source>
        <dbReference type="PROSITE-ProRule" id="PRU00302"/>
    </source>
</evidence>
<evidence type="ECO:0000255" key="5">
    <source>
        <dbReference type="PROSITE-ProRule" id="PRU00347"/>
    </source>
</evidence>
<evidence type="ECO:0000255" key="6">
    <source>
        <dbReference type="PROSITE-ProRule" id="PRU00570"/>
    </source>
</evidence>
<evidence type="ECO:0000255" key="7">
    <source>
        <dbReference type="PROSITE-ProRule" id="PRU00580"/>
    </source>
</evidence>
<evidence type="ECO:0000256" key="8">
    <source>
        <dbReference type="SAM" id="MobiDB-lite"/>
    </source>
</evidence>
<evidence type="ECO:0000269" key="9">
    <source>
    </source>
</evidence>
<evidence type="ECO:0000269" key="10">
    <source>
    </source>
</evidence>
<evidence type="ECO:0000303" key="11">
    <source>
    </source>
</evidence>
<evidence type="ECO:0000312" key="12">
    <source>
        <dbReference type="WormBase" id="K03H1.5"/>
    </source>
</evidence>
<accession>P34501</accession>
<proteinExistence type="evidence at protein level"/>
<sequence length="1385" mass="159182">MWTARHAVALLVVLTYAYSSILPPGTTFVQSIRDIFRFQEQLKKENVEDTICSETPPESSIPNRDELLELIRKSKIEDHKFDEHVRKKRQLSRISYQEYLDNLGKADYDVRIEEGWTEILYPFGTWAMDKQLMGQAGRETQTNLGFDCPFFGFRFNYTMVYPMGMLSFGLPPFSAPPWTFPNPAWPKQRDHSFVAAFYADAMFQWIGNTKISNVFFRSVHRPRLDDDEVYERNSQTNYGAPNYQQAGAQSAANQQFSNPSQYSQNLNAYSQNQQYNTQLLQQQQQIYGKRKKRQMPGRVSQPGMVVDPWLLDNITRHIQDGYTGANGFRAEHAFIATWYRMAHGGAARALDVSQFEHVKDWQNTFQVVLASDEIRTFAIFNYARLNWTSSNEAGGLDGFGGKQAAMAGFNGGNGTGWYGLPYSGEGRLWKLGYFSNVLTPGRWIHRVDEVIIPAGCTNASNGGMMTAPPWGPMHGGMAINVSGPCLRPADSVKVNFENWQTSCTRLSRVRARCIMPMFHKIGLVPIRMSRDGGQSFPFFGKFYVVNSERAPASVSLKDSVDNKTNRWYEPYAQELALGWQAMNLTWNTGARVDISLFGYWEDADRSHFERIDYLARGISNTGSYSFRPQQLTKQFLLRDAWQKFHFGFVQVALADAEDGVMWSKPTPFPWYHLHEWERYYGRNWPIDMCIEWFEYDGKRNNFQIDLTTDFPCPCKLPQAMLDLGRFMPIMDCDKDGDTSCPFNKGAQHCIQSVQPTFSGSSQQCCYDYDGYLMFTDDWEPDGDYTTFFQPGTPARAHRYGAAPYRLPPFIPTLSNYQLDLNPYRTCCKYADHCEFYYWRRMTNGCQDYRAPAAGYIYGEPHVITYDGIRYTMPGKGYYVLTMSDSPYHKLMVQVRLEQPDDTLWHAHVNATVITGVAVQENDSSIVQVYARKPMRRWRYRTDVYVDGTRRFFDKPHWKHQQFKHLDIRNPLQNMNQSEIVIMLKSGVGIRIFEGFGMLDVMVTLPPSYNTTCRPGESLSSSLNAPRGQRRCYTTLGLLGTYNNDPADDLTTPSGTVTRVQNPTTTASTTQMIYEQFASFWKIDGTNDKIGGVLFQDKFKPIYNPLLFAESDYRPVYWPQTIDMNASRVFTMEQVVSTCQNNPECEYDFIMTGRKEVGLTTLRRQKEFFALQKTGSKQLISCGPLLKKEGVVKTPPAANYLDGDKVVFSCKPKYYIHGDIERVCRNGTWSPGWWAWCRDRNLEYALKWMTALLSIFGISLIFVIFFCILWNIRKKKQAAHAERLQLKEQSDRLNKLENERIFGTSPEKTPLIETDFRSNFNMNQPSRPIPSQPPSSQYSPPVFAAPPPPSQPTRLPTYTNAISQQQRQFEPPRPPRGNMRFETSAI</sequence>
<comment type="function">
    <text evidence="2 10">May negatively regulate activity of innexin gap junction protein inx-16, thereby mediating the rhythmic frequency of the defecation motor program (PubMed:37067458). Required for the clustering of inx-16 to the cell-cell junction of the intestinal epithelia (PubMed:37067458). Probably dispensable for intestinal integrity (PubMed:37067458). May be a cytokine receptor (By similarity).</text>
</comment>
<comment type="subcellular location">
    <subcellularLocation>
        <location evidence="3">Membrane</location>
        <topology evidence="3">Single-pass membrane protein</topology>
    </subcellularLocation>
    <subcellularLocation>
        <location evidence="10">Cell junction</location>
    </subcellularLocation>
    <text evidence="10">Localized to the cell-cell junction of the intestinal epithelia; localized in an inx-16-independent manner.</text>
</comment>
<comment type="tissue specificity">
    <text evidence="10">Highly expressed in the intestinal epithelia.</text>
</comment>
<comment type="domain">
    <text evidence="10">Domain composition is important for subcellular localization and function in mediating defecation motor program (DMP) cycle periodicity.</text>
</comment>
<comment type="disruption phenotype">
    <text evidence="10">RNAi-mediated knockdown causes a significantly shorter defecation motor program (DMP) cycle period; phenotype suppressed in an egl-8/PLCbeta or inx-16 mutant background (PubMed:37067458). Expanded distribution of inx-16 at the apical junction domain of the intestinal epithelia (PubMed:37067458). Suppresses the long DMP in a gon-2, plc-3, or vav-1 mutant background (PubMed:37067458). Similar brood size, developmental growth rate, and lipid accumulation to age-matched controls (PubMed:37067458).</text>
</comment>
<feature type="signal peptide" evidence="3">
    <location>
        <begin position="1"/>
        <end position="19"/>
    </location>
</feature>
<feature type="chain" id="PRO_0000014290" description="Defecation cycle abnormal dec-7">
    <location>
        <begin position="20"/>
        <end position="1385"/>
    </location>
</feature>
<feature type="transmembrane region" description="Helical" evidence="3">
    <location>
        <begin position="1251"/>
        <end position="1271"/>
    </location>
</feature>
<feature type="domain" description="NIDO" evidence="6">
    <location>
        <begin position="285"/>
        <end position="450"/>
    </location>
</feature>
<feature type="domain" description="AMOP" evidence="5">
    <location>
        <begin position="681"/>
        <end position="840"/>
    </location>
</feature>
<feature type="domain" description="VWFD" evidence="7">
    <location>
        <begin position="852"/>
        <end position="1088"/>
    </location>
</feature>
<feature type="domain" description="Sushi" evidence="4">
    <location>
        <begin position="1179"/>
        <end position="1238"/>
    </location>
</feature>
<feature type="region of interest" description="Disordered" evidence="8">
    <location>
        <begin position="234"/>
        <end position="262"/>
    </location>
</feature>
<feature type="region of interest" description="Disordered" evidence="8">
    <location>
        <begin position="1321"/>
        <end position="1385"/>
    </location>
</feature>
<feature type="compositionally biased region" description="Low complexity" evidence="8">
    <location>
        <begin position="242"/>
        <end position="261"/>
    </location>
</feature>
<feature type="glycosylation site" description="N-linked (GlcNAc...) asparagine" evidence="3">
    <location>
        <position position="156"/>
    </location>
</feature>
<feature type="glycosylation site" description="N-linked (GlcNAc...) asparagine" evidence="9">
    <location>
        <position position="313"/>
    </location>
</feature>
<feature type="glycosylation site" description="N-linked (GlcNAc...) asparagine" evidence="9">
    <location>
        <position position="386"/>
    </location>
</feature>
<feature type="glycosylation site" description="N-linked (GlcNAc...) asparagine" evidence="3">
    <location>
        <position position="413"/>
    </location>
</feature>
<feature type="glycosylation site" description="N-linked (GlcNAc...) asparagine" evidence="3">
    <location>
        <position position="458"/>
    </location>
</feature>
<feature type="glycosylation site" description="N-linked (GlcNAc...) asparagine" evidence="3">
    <location>
        <position position="480"/>
    </location>
</feature>
<feature type="glycosylation site" description="N-linked (GlcNAc...) asparagine" evidence="9">
    <location>
        <position position="562"/>
    </location>
</feature>
<feature type="glycosylation site" description="N-linked (GlcNAc...) asparagine" evidence="3">
    <location>
        <position position="583"/>
    </location>
</feature>
<feature type="glycosylation site" description="N-linked (GlcNAc...) asparagine" evidence="3">
    <location>
        <position position="909"/>
    </location>
</feature>
<feature type="glycosylation site" description="N-linked (GlcNAc...) asparagine" evidence="3">
    <location>
        <position position="921"/>
    </location>
</feature>
<feature type="glycosylation site" description="N-linked (GlcNAc...) asparagine" evidence="3">
    <location>
        <position position="975"/>
    </location>
</feature>
<feature type="glycosylation site" description="N-linked (GlcNAc...) asparagine" evidence="3">
    <location>
        <position position="1009"/>
    </location>
</feature>
<feature type="glycosylation site" description="N-linked (GlcNAc...) asparagine" evidence="3">
    <location>
        <position position="1124"/>
    </location>
</feature>
<feature type="glycosylation site" description="N-linked (GlcNAc...) asparagine" evidence="9">
    <location>
        <position position="1225"/>
    </location>
</feature>
<feature type="disulfide bond" evidence="1">
    <location>
        <begin position="1181"/>
        <end position="1223"/>
    </location>
</feature>
<feature type="disulfide bond" evidence="1">
    <location>
        <begin position="1209"/>
        <end position="1236"/>
    </location>
</feature>
<feature type="mutagenesis site" description="In qm166; Significantly shorter defecation motor program (DMP) cycle period." evidence="10">
    <original>G</original>
    <variation>E</variation>
    <location>
        <position position="791"/>
    </location>
</feature>
<feature type="mutagenesis site" description="In sa296; Significantly shorter defecation motor program (DMP) cycle period." evidence="10">
    <original>C</original>
    <variation>Y</variation>
    <location>
        <position position="1144"/>
    </location>
</feature>
<gene>
    <name evidence="12" type="primary">dec-7</name>
    <name evidence="12" type="ORF">K03H1.5</name>
</gene>
<name>SUSD_CAEEL</name>
<protein>
    <recommendedName>
        <fullName evidence="12">Defecation cycle abnormal dec-7</fullName>
    </recommendedName>
    <alternativeName>
        <fullName evidence="11">Sushi domain-containing 2 homolog</fullName>
        <shortName evidence="11">SUSD2</shortName>
    </alternativeName>
</protein>
<reference key="1">
    <citation type="journal article" date="1994" name="Nature">
        <title>2.2 Mb of contiguous nucleotide sequence from chromosome III of C. elegans.</title>
        <authorList>
            <person name="Wilson R."/>
            <person name="Ainscough R."/>
            <person name="Anderson K."/>
            <person name="Baynes C."/>
            <person name="Berks M."/>
            <person name="Bonfield J."/>
            <person name="Burton J."/>
            <person name="Connell M."/>
            <person name="Copsey T."/>
            <person name="Cooper J."/>
            <person name="Coulson A."/>
            <person name="Craxton M."/>
            <person name="Dear S."/>
            <person name="Du Z."/>
            <person name="Durbin R."/>
            <person name="Favello A."/>
            <person name="Fraser A."/>
            <person name="Fulton L."/>
            <person name="Gardner A."/>
            <person name="Green P."/>
            <person name="Hawkins T."/>
            <person name="Hillier L."/>
            <person name="Jier M."/>
            <person name="Johnston L."/>
            <person name="Jones M."/>
            <person name="Kershaw J."/>
            <person name="Kirsten J."/>
            <person name="Laisster N."/>
            <person name="Latreille P."/>
            <person name="Lightning J."/>
            <person name="Lloyd C."/>
            <person name="Mortimore B."/>
            <person name="O'Callaghan M."/>
            <person name="Parsons J."/>
            <person name="Percy C."/>
            <person name="Rifken L."/>
            <person name="Roopra A."/>
            <person name="Saunders D."/>
            <person name="Shownkeen R."/>
            <person name="Sims M."/>
            <person name="Smaldon N."/>
            <person name="Smith A."/>
            <person name="Smith M."/>
            <person name="Sonnhammer E."/>
            <person name="Staden R."/>
            <person name="Sulston J."/>
            <person name="Thierry-Mieg J."/>
            <person name="Thomas K."/>
            <person name="Vaudin M."/>
            <person name="Vaughan K."/>
            <person name="Waterston R."/>
            <person name="Watson A."/>
            <person name="Weinstock L."/>
            <person name="Wilkinson-Sproat J."/>
            <person name="Wohldman P."/>
        </authorList>
    </citation>
    <scope>NUCLEOTIDE SEQUENCE [LARGE SCALE GENOMIC DNA]</scope>
    <source>
        <strain>Bristol N2</strain>
    </source>
</reference>
<reference key="2">
    <citation type="journal article" date="1998" name="Science">
        <title>Genome sequence of the nematode C. elegans: a platform for investigating biology.</title>
        <authorList>
            <consortium name="The C. elegans sequencing consortium"/>
        </authorList>
    </citation>
    <scope>NUCLEOTIDE SEQUENCE [LARGE SCALE GENOMIC DNA]</scope>
    <source>
        <strain>Bristol N2</strain>
    </source>
</reference>
<reference key="3">
    <citation type="journal article" date="2007" name="Mol. Cell. Proteomics">
        <title>Proteomics reveals N-linked glycoprotein diversity in Caenorhabditis elegans and suggests an atypical translocation mechanism for integral membrane proteins.</title>
        <authorList>
            <person name="Kaji H."/>
            <person name="Kamiie J."/>
            <person name="Kawakami H."/>
            <person name="Kido K."/>
            <person name="Yamauchi Y."/>
            <person name="Shinkawa T."/>
            <person name="Taoka M."/>
            <person name="Takahashi N."/>
            <person name="Isobe T."/>
        </authorList>
    </citation>
    <scope>GLYCOSYLATION [LARGE SCALE ANALYSIS] AT ASN-313; ASN-386; ASN-562 AND ASN-1225</scope>
    <scope>IDENTIFICATION BY MASS SPECTROMETRY</scope>
    <source>
        <strain>Bristol N2</strain>
    </source>
</reference>
<reference key="4">
    <citation type="journal article" date="2023" name="Am. J. Physiol.">
        <title>DEC-7/SUSD2, a sushi domain-containing protein, regulates an ultradian behavior mediated by intestinal epithelial Ca2+ oscillations in Caenorhabditis elegans.</title>
        <authorList>
            <person name="Laboy J.T."/>
            <person name="Bonner J."/>
            <person name="Norman K.R."/>
        </authorList>
    </citation>
    <scope>FUNCTION</scope>
    <scope>SUBCELLULAR LOCATION</scope>
    <scope>TISSUE SPECIFICITY</scope>
    <scope>DOMAIN</scope>
    <scope>DISRUPTION PHENOTYPE</scope>
    <scope>MUTAGENESIS OF GLY-791 AND CYS-1144</scope>
</reference>